<feature type="initiator methionine" description="Removed" evidence="3">
    <location>
        <position position="1"/>
    </location>
</feature>
<feature type="chain" id="PRO_0000085046" description="Biphenyl dioxygenase subunit alpha">
    <location>
        <begin position="2"/>
        <end position="459"/>
    </location>
</feature>
<feature type="domain" description="Rieske" evidence="2">
    <location>
        <begin position="58"/>
        <end position="156"/>
    </location>
</feature>
<feature type="binding site" evidence="2">
    <location>
        <position position="100"/>
    </location>
    <ligand>
        <name>[2Fe-2S] cluster</name>
        <dbReference type="ChEBI" id="CHEBI:190135"/>
    </ligand>
</feature>
<feature type="binding site" evidence="2">
    <location>
        <position position="102"/>
    </location>
    <ligand>
        <name>[2Fe-2S] cluster</name>
        <dbReference type="ChEBI" id="CHEBI:190135"/>
    </ligand>
</feature>
<feature type="binding site" evidence="2">
    <location>
        <position position="120"/>
    </location>
    <ligand>
        <name>[2Fe-2S] cluster</name>
        <dbReference type="ChEBI" id="CHEBI:190135"/>
    </ligand>
</feature>
<feature type="binding site" evidence="2">
    <location>
        <position position="123"/>
    </location>
    <ligand>
        <name>[2Fe-2S] cluster</name>
        <dbReference type="ChEBI" id="CHEBI:190135"/>
    </ligand>
</feature>
<feature type="binding site" evidence="1">
    <location>
        <position position="233"/>
    </location>
    <ligand>
        <name>Fe cation</name>
        <dbReference type="ChEBI" id="CHEBI:24875"/>
    </ligand>
</feature>
<feature type="binding site" evidence="1">
    <location>
        <position position="239"/>
    </location>
    <ligand>
        <name>Fe cation</name>
        <dbReference type="ChEBI" id="CHEBI:24875"/>
    </ligand>
</feature>
<feature type="helix" evidence="8">
    <location>
        <begin position="21"/>
        <end position="25"/>
    </location>
</feature>
<feature type="turn" evidence="8">
    <location>
        <begin position="30"/>
        <end position="33"/>
    </location>
</feature>
<feature type="helix" evidence="8">
    <location>
        <begin position="37"/>
        <end position="40"/>
    </location>
</feature>
<feature type="helix" evidence="8">
    <location>
        <begin position="43"/>
        <end position="52"/>
    </location>
</feature>
<feature type="turn" evidence="8">
    <location>
        <begin position="53"/>
        <end position="56"/>
    </location>
</feature>
<feature type="strand" evidence="8">
    <location>
        <begin position="59"/>
        <end position="63"/>
    </location>
</feature>
<feature type="helix" evidence="8">
    <location>
        <begin position="64"/>
        <end position="66"/>
    </location>
</feature>
<feature type="strand" evidence="8">
    <location>
        <begin position="72"/>
        <end position="78"/>
    </location>
</feature>
<feature type="strand" evidence="8">
    <location>
        <begin position="81"/>
        <end position="87"/>
    </location>
</feature>
<feature type="strand" evidence="8">
    <location>
        <begin position="93"/>
        <end position="98"/>
    </location>
</feature>
<feature type="turn" evidence="8">
    <location>
        <begin position="101"/>
        <end position="103"/>
    </location>
</feature>
<feature type="strand" evidence="8">
    <location>
        <begin position="110"/>
        <end position="114"/>
    </location>
</feature>
<feature type="turn" evidence="8">
    <location>
        <begin position="121"/>
        <end position="123"/>
    </location>
</feature>
<feature type="strand" evidence="8">
    <location>
        <begin position="133"/>
        <end position="135"/>
    </location>
</feature>
<feature type="helix" evidence="8">
    <location>
        <begin position="139"/>
        <end position="142"/>
    </location>
</feature>
<feature type="helix" evidence="8">
    <location>
        <begin position="155"/>
        <end position="157"/>
    </location>
</feature>
<feature type="strand" evidence="8">
    <location>
        <begin position="164"/>
        <end position="168"/>
    </location>
</feature>
<feature type="strand" evidence="8">
    <location>
        <begin position="171"/>
        <end position="176"/>
    </location>
</feature>
<feature type="strand" evidence="5">
    <location>
        <begin position="178"/>
        <end position="180"/>
    </location>
</feature>
<feature type="helix" evidence="8">
    <location>
        <begin position="183"/>
        <end position="187"/>
    </location>
</feature>
<feature type="helix" evidence="8">
    <location>
        <begin position="188"/>
        <end position="190"/>
    </location>
</feature>
<feature type="helix" evidence="8">
    <location>
        <begin position="191"/>
        <end position="198"/>
    </location>
</feature>
<feature type="strand" evidence="6">
    <location>
        <begin position="199"/>
        <end position="201"/>
    </location>
</feature>
<feature type="strand" evidence="8">
    <location>
        <begin position="205"/>
        <end position="207"/>
    </location>
</feature>
<feature type="strand" evidence="8">
    <location>
        <begin position="212"/>
        <end position="218"/>
    </location>
</feature>
<feature type="helix" evidence="8">
    <location>
        <begin position="220"/>
        <end position="229"/>
    </location>
</feature>
<feature type="turn" evidence="8">
    <location>
        <begin position="232"/>
        <end position="239"/>
    </location>
</feature>
<feature type="helix" evidence="8">
    <location>
        <begin position="240"/>
        <end position="245"/>
    </location>
</feature>
<feature type="helix" evidence="8">
    <location>
        <begin position="253"/>
        <end position="255"/>
    </location>
</feature>
<feature type="strand" evidence="8">
    <location>
        <begin position="262"/>
        <end position="266"/>
    </location>
</feature>
<feature type="strand" evidence="8">
    <location>
        <begin position="268"/>
        <end position="271"/>
    </location>
</feature>
<feature type="strand" evidence="8">
    <location>
        <begin position="273"/>
        <end position="279"/>
    </location>
</feature>
<feature type="helix" evidence="8">
    <location>
        <begin position="281"/>
        <end position="297"/>
    </location>
</feature>
<feature type="helix" evidence="8">
    <location>
        <begin position="300"/>
        <end position="308"/>
    </location>
</feature>
<feature type="turn" evidence="8">
    <location>
        <begin position="309"/>
        <end position="313"/>
    </location>
</feature>
<feature type="helix" evidence="8">
    <location>
        <begin position="316"/>
        <end position="318"/>
    </location>
</feature>
<feature type="strand" evidence="8">
    <location>
        <begin position="319"/>
        <end position="326"/>
    </location>
</feature>
<feature type="turn" evidence="8">
    <location>
        <begin position="327"/>
        <end position="329"/>
    </location>
</feature>
<feature type="strand" evidence="8">
    <location>
        <begin position="330"/>
        <end position="332"/>
    </location>
</feature>
<feature type="turn" evidence="8">
    <location>
        <begin position="334"/>
        <end position="336"/>
    </location>
</feature>
<feature type="strand" evidence="8">
    <location>
        <begin position="338"/>
        <end position="344"/>
    </location>
</feature>
<feature type="strand" evidence="8">
    <location>
        <begin position="350"/>
        <end position="359"/>
    </location>
</feature>
<feature type="helix" evidence="8">
    <location>
        <begin position="364"/>
        <end position="377"/>
    </location>
</feature>
<feature type="helix" evidence="8">
    <location>
        <begin position="385"/>
        <end position="398"/>
    </location>
</feature>
<feature type="helix" evidence="8">
    <location>
        <begin position="403"/>
        <end position="405"/>
    </location>
</feature>
<feature type="turn" evidence="8">
    <location>
        <begin position="413"/>
        <end position="416"/>
    </location>
</feature>
<feature type="strand" evidence="7">
    <location>
        <begin position="419"/>
        <end position="421"/>
    </location>
</feature>
<feature type="strand" evidence="8">
    <location>
        <begin position="423"/>
        <end position="425"/>
    </location>
</feature>
<feature type="strand" evidence="8">
    <location>
        <begin position="427"/>
        <end position="433"/>
    </location>
</feature>
<feature type="helix" evidence="8">
    <location>
        <begin position="436"/>
        <end position="450"/>
    </location>
</feature>
<feature type="helix" evidence="8">
    <location>
        <begin position="454"/>
        <end position="457"/>
    </location>
</feature>
<comment type="catalytic activity">
    <reaction>
        <text>biphenyl + NADH + O2 + H(+) = (2R,3S)-3-phenylcyclohexa-3,5-diene-1,2-diol + NAD(+)</text>
        <dbReference type="Rhea" id="RHEA:18165"/>
        <dbReference type="ChEBI" id="CHEBI:15378"/>
        <dbReference type="ChEBI" id="CHEBI:15379"/>
        <dbReference type="ChEBI" id="CHEBI:17097"/>
        <dbReference type="ChEBI" id="CHEBI:32922"/>
        <dbReference type="ChEBI" id="CHEBI:57540"/>
        <dbReference type="ChEBI" id="CHEBI:57945"/>
        <dbReference type="EC" id="1.14.12.18"/>
    </reaction>
</comment>
<comment type="cofactor">
    <cofactor>
        <name>[2Fe-2S] cluster</name>
        <dbReference type="ChEBI" id="CHEBI:190135"/>
    </cofactor>
    <text>Binds 1 [2Fe-2S] cluster per subunit.</text>
</comment>
<comment type="cofactor">
    <cofactor>
        <name>Fe cation</name>
        <dbReference type="ChEBI" id="CHEBI:24875"/>
    </cofactor>
    <text>Binds 1 Fe cation per subunit.</text>
</comment>
<comment type="pathway">
    <text>Xenobiotic degradation; biphenyl degradation; 2-hydroxy-2,4-pentadienoate and benzoate from biphenyl: step 1/4.</text>
</comment>
<comment type="subunit">
    <text>Heterohexamer consisting of three BphA subunits and three BphE subunits. A ferredoxin (BphF) and a ferredoxin reductase (BphG) must be present to obtain activity.</text>
</comment>
<comment type="similarity">
    <text evidence="4">Belongs to the bacterial ring-hydroxylating dioxygenase alpha subunit family.</text>
</comment>
<organism>
    <name type="scientific">Paraburkholderia xenovorans (strain LB400)</name>
    <dbReference type="NCBI Taxonomy" id="266265"/>
    <lineage>
        <taxon>Bacteria</taxon>
        <taxon>Pseudomonadati</taxon>
        <taxon>Pseudomonadota</taxon>
        <taxon>Betaproteobacteria</taxon>
        <taxon>Burkholderiales</taxon>
        <taxon>Burkholderiaceae</taxon>
        <taxon>Paraburkholderia</taxon>
    </lineage>
</organism>
<protein>
    <recommendedName>
        <fullName>Biphenyl dioxygenase subunit alpha</fullName>
        <ecNumber>1.14.12.18</ecNumber>
    </recommendedName>
    <alternativeName>
        <fullName>Biphenyl 2,3-dioxygenase</fullName>
    </alternativeName>
</protein>
<proteinExistence type="evidence at protein level"/>
<reference key="1">
    <citation type="journal article" date="1992" name="J. Bacteriol.">
        <title>Nucleotide sequencing and transcriptional mapping of the genes encoding biphenyl dioxygenase, a multicomponent polychlorinated-biphenyl-degrading enzyme in Pseudomonas strain LB400.</title>
        <authorList>
            <person name="Erickson B.D."/>
            <person name="Mondello F.J."/>
        </authorList>
    </citation>
    <scope>NUCLEOTIDE SEQUENCE [GENOMIC DNA]</scope>
</reference>
<reference key="2">
    <citation type="journal article" date="2006" name="Proc. Natl. Acad. Sci. U.S.A.">
        <title>Burkholderia xenovorans LB400 harbors a multi-replicon, 9.73-Mbp genome shaped for versatility.</title>
        <authorList>
            <person name="Chain P.S.G."/>
            <person name="Denef V.J."/>
            <person name="Konstantinidis K.T."/>
            <person name="Vergez L.M."/>
            <person name="Agullo L."/>
            <person name="Reyes V.L."/>
            <person name="Hauser L."/>
            <person name="Cordova M."/>
            <person name="Gomez L."/>
            <person name="Gonzalez M."/>
            <person name="Land M."/>
            <person name="Lao V."/>
            <person name="Larimer F."/>
            <person name="LiPuma J.J."/>
            <person name="Mahenthiralingam E."/>
            <person name="Malfatti S.A."/>
            <person name="Marx C.J."/>
            <person name="Parnell J.J."/>
            <person name="Ramette A."/>
            <person name="Richardson P."/>
            <person name="Seeger M."/>
            <person name="Smith D."/>
            <person name="Spilker T."/>
            <person name="Sul W.J."/>
            <person name="Tsoi T.V."/>
            <person name="Ulrich L.E."/>
            <person name="Zhulin I.B."/>
            <person name="Tiedje J.M."/>
        </authorList>
    </citation>
    <scope>NUCLEOTIDE SEQUENCE [LARGE SCALE GENOMIC DNA]</scope>
    <source>
        <strain>LB400</strain>
    </source>
</reference>
<reference key="3">
    <citation type="journal article" date="1995" name="J. Bacteriol.">
        <title>Purification and characterization of the oxygenase component of biphenyl 2,3-dioxygenase from Pseudomonas sp. strain LB400.</title>
        <authorList>
            <person name="Haddock J.D."/>
            <person name="Gibson D.T."/>
        </authorList>
    </citation>
    <scope>PROTEIN SEQUENCE OF 2-11</scope>
    <scope>CHARACTERIZATION</scope>
</reference>
<reference key="4">
    <citation type="journal article" date="1996" name="J. Bacteriol.">
        <authorList>
            <person name="Haddock J.D."/>
            <person name="Gibson D.T."/>
        </authorList>
    </citation>
    <scope>ERRATUM OF PUBMED:7592331</scope>
</reference>
<gene>
    <name type="primary">bphA</name>
    <name type="ordered locus">Bxeno_C1131</name>
    <name type="ORF">Bxe_C1197</name>
</gene>
<evidence type="ECO:0000250" key="1"/>
<evidence type="ECO:0000255" key="2">
    <source>
        <dbReference type="PROSITE-ProRule" id="PRU00628"/>
    </source>
</evidence>
<evidence type="ECO:0000269" key="3">
    <source>
    </source>
</evidence>
<evidence type="ECO:0000305" key="4"/>
<evidence type="ECO:0007829" key="5">
    <source>
        <dbReference type="PDB" id="2XR8"/>
    </source>
</evidence>
<evidence type="ECO:0007829" key="6">
    <source>
        <dbReference type="PDB" id="2YFI"/>
    </source>
</evidence>
<evidence type="ECO:0007829" key="7">
    <source>
        <dbReference type="PDB" id="2YFL"/>
    </source>
</evidence>
<evidence type="ECO:0007829" key="8">
    <source>
        <dbReference type="PDB" id="5AEW"/>
    </source>
</evidence>
<accession>P37333</accession>
<accession>Q13FT0</accession>
<dbReference type="EC" id="1.14.12.18"/>
<dbReference type="EMBL" id="M86348">
    <property type="protein sequence ID" value="AAB63425.1"/>
    <property type="molecule type" value="Genomic_DNA"/>
</dbReference>
<dbReference type="EMBL" id="CP000272">
    <property type="protein sequence ID" value="ABE37059.1"/>
    <property type="molecule type" value="Genomic_DNA"/>
</dbReference>
<dbReference type="RefSeq" id="WP_011494299.1">
    <property type="nucleotide sequence ID" value="NZ_CP008761.1"/>
</dbReference>
<dbReference type="PDB" id="2XR8">
    <property type="method" value="X-ray"/>
    <property type="resolution" value="2.49 A"/>
    <property type="chains" value="A/C/E/G/I/K/M/O/Q/S/U/W=1-459"/>
</dbReference>
<dbReference type="PDB" id="2XRX">
    <property type="method" value="X-ray"/>
    <property type="resolution" value="2.42 A"/>
    <property type="chains" value="A/C/E/G/I/K/M/O/Q/S/U/W=1-459"/>
</dbReference>
<dbReference type="PDB" id="2XSH">
    <property type="method" value="X-ray"/>
    <property type="resolution" value="2.29 A"/>
    <property type="chains" value="A/C/E/G/I/K=1-459"/>
</dbReference>
<dbReference type="PDB" id="2XSO">
    <property type="method" value="X-ray"/>
    <property type="resolution" value="2.20 A"/>
    <property type="chains" value="A/C/E/G/I/K/M/O/Q/S/U/W=1-459"/>
</dbReference>
<dbReference type="PDB" id="2YFI">
    <property type="method" value="X-ray"/>
    <property type="resolution" value="2.15 A"/>
    <property type="chains" value="A/C/E/G/I/K=1-459"/>
</dbReference>
<dbReference type="PDB" id="2YFJ">
    <property type="method" value="X-ray"/>
    <property type="resolution" value="2.15 A"/>
    <property type="chains" value="A/C/E/G/I/K=1-459"/>
</dbReference>
<dbReference type="PDB" id="2YFL">
    <property type="method" value="X-ray"/>
    <property type="resolution" value="2.60 A"/>
    <property type="chains" value="A/C/E/G/I/K=1-459"/>
</dbReference>
<dbReference type="PDB" id="5AEU">
    <property type="method" value="X-ray"/>
    <property type="resolution" value="2.49 A"/>
    <property type="chains" value="A/C/E/G=1-459"/>
</dbReference>
<dbReference type="PDB" id="5AEW">
    <property type="method" value="X-ray"/>
    <property type="resolution" value="1.88 A"/>
    <property type="chains" value="A/C/E/G/I/K/M/O/Q/S/U/W=1-459"/>
</dbReference>
<dbReference type="PDBsum" id="2XR8"/>
<dbReference type="PDBsum" id="2XRX"/>
<dbReference type="PDBsum" id="2XSH"/>
<dbReference type="PDBsum" id="2XSO"/>
<dbReference type="PDBsum" id="2YFI"/>
<dbReference type="PDBsum" id="2YFJ"/>
<dbReference type="PDBsum" id="2YFL"/>
<dbReference type="PDBsum" id="5AEU"/>
<dbReference type="PDBsum" id="5AEW"/>
<dbReference type="SMR" id="P37333"/>
<dbReference type="STRING" id="266265.Bxe_C1197"/>
<dbReference type="KEGG" id="bxb:DR64_8608"/>
<dbReference type="KEGG" id="bxe:Bxe_C1197"/>
<dbReference type="PATRIC" id="fig|266265.5.peg.8947"/>
<dbReference type="eggNOG" id="COG4638">
    <property type="taxonomic scope" value="Bacteria"/>
</dbReference>
<dbReference type="OrthoDB" id="9790995at2"/>
<dbReference type="BRENDA" id="1.14.12.18">
    <property type="organism ID" value="7691"/>
</dbReference>
<dbReference type="UniPathway" id="UPA00155">
    <property type="reaction ID" value="UER00250"/>
</dbReference>
<dbReference type="EvolutionaryTrace" id="P37333"/>
<dbReference type="Proteomes" id="UP000001817">
    <property type="component" value="Chromosome 3"/>
</dbReference>
<dbReference type="GO" id="GO:0051537">
    <property type="term" value="F:2 iron, 2 sulfur cluster binding"/>
    <property type="evidence" value="ECO:0007669"/>
    <property type="project" value="UniProtKB-KW"/>
</dbReference>
<dbReference type="GO" id="GO:0018687">
    <property type="term" value="F:biphenyl 2,3-dioxygenase activity"/>
    <property type="evidence" value="ECO:0007669"/>
    <property type="project" value="UniProtKB-EC"/>
</dbReference>
<dbReference type="GO" id="GO:0005506">
    <property type="term" value="F:iron ion binding"/>
    <property type="evidence" value="ECO:0007669"/>
    <property type="project" value="InterPro"/>
</dbReference>
<dbReference type="GO" id="GO:0009056">
    <property type="term" value="P:catabolic process"/>
    <property type="evidence" value="ECO:0007669"/>
    <property type="project" value="UniProtKB-KW"/>
</dbReference>
<dbReference type="CDD" id="cd08881">
    <property type="entry name" value="RHO_alpha_C_NDO-like"/>
    <property type="match status" value="1"/>
</dbReference>
<dbReference type="Gene3D" id="3.90.380.10">
    <property type="entry name" value="Naphthalene 1,2-dioxygenase Alpha Subunit, Chain A, domain 1"/>
    <property type="match status" value="1"/>
</dbReference>
<dbReference type="Gene3D" id="2.102.10.10">
    <property type="entry name" value="Rieske [2Fe-2S] iron-sulphur domain"/>
    <property type="match status" value="1"/>
</dbReference>
<dbReference type="InterPro" id="IPR043266">
    <property type="entry name" value="RHO_NdoB-like_C"/>
</dbReference>
<dbReference type="InterPro" id="IPR017941">
    <property type="entry name" value="Rieske_2Fe-2S"/>
</dbReference>
<dbReference type="InterPro" id="IPR036922">
    <property type="entry name" value="Rieske_2Fe-2S_sf"/>
</dbReference>
<dbReference type="InterPro" id="IPR015881">
    <property type="entry name" value="Ring-hydroxy_dOase_2Fe2S_BS"/>
</dbReference>
<dbReference type="InterPro" id="IPR015879">
    <property type="entry name" value="Ring_hydroxy_dOase_asu_C_dom"/>
</dbReference>
<dbReference type="InterPro" id="IPR001663">
    <property type="entry name" value="Rng_hydr_dOase-A"/>
</dbReference>
<dbReference type="PANTHER" id="PTHR43756:SF1">
    <property type="entry name" value="3-PHENYLPROPIONATE_CINNAMIC ACID DIOXYGENASE SUBUNIT ALPHA"/>
    <property type="match status" value="1"/>
</dbReference>
<dbReference type="PANTHER" id="PTHR43756">
    <property type="entry name" value="CHOLINE MONOOXYGENASE, CHLOROPLASTIC"/>
    <property type="match status" value="1"/>
</dbReference>
<dbReference type="Pfam" id="PF00355">
    <property type="entry name" value="Rieske"/>
    <property type="match status" value="1"/>
</dbReference>
<dbReference type="Pfam" id="PF00848">
    <property type="entry name" value="Ring_hydroxyl_A"/>
    <property type="match status" value="1"/>
</dbReference>
<dbReference type="PRINTS" id="PR00090">
    <property type="entry name" value="RNGDIOXGNASE"/>
</dbReference>
<dbReference type="SUPFAM" id="SSF55961">
    <property type="entry name" value="Bet v1-like"/>
    <property type="match status" value="1"/>
</dbReference>
<dbReference type="SUPFAM" id="SSF50022">
    <property type="entry name" value="ISP domain"/>
    <property type="match status" value="1"/>
</dbReference>
<dbReference type="PROSITE" id="PS51296">
    <property type="entry name" value="RIESKE"/>
    <property type="match status" value="1"/>
</dbReference>
<dbReference type="PROSITE" id="PS00570">
    <property type="entry name" value="RING_HYDROXYL_ALPHA"/>
    <property type="match status" value="1"/>
</dbReference>
<sequence length="459" mass="51513">MSSAIKEVQGAPVKWVTNWTPEAIRGLVDQEKGLLDPRIYADQSLYELELERVFGRSWLLLGHESHVPETGDFLATYMGEDPVVMVRQKDKSIKVFLNQCRHRGMRICRSDAGNAKAFTCSYHGWAYDIAGKLVNVPFEKEAFCDKKEGDCGFDKAEWGPLQARVATYKGLVFANWDVQAPDLETYLGDARPYMDVMLDRTPAGTVAIGGMQKWVIPCNWKFAAEQFCSDMYHAGTTTHLSGILAGIPPEMDLSQAQIPTKGNQFRAAWGGHGSGWYVDEPGSLLAVMGPKVTQYWTEGPAAELAEQRLGHTGMPVRRMVGQHMTIFPTCSFLPTFNNIRIWHPRGPNEIEVWAFTLVDADAPAEIKEEYRRHNIRNFSAGGVFEQDDGENWVEIQKGLRGYKAKSQPLNAQMGLGRSQTGHPDFPGNVGYVYAEEAARGMYHHWMRMMSEPSWATLKP</sequence>
<name>BPHA_PARXL</name>
<keyword id="KW-0001">2Fe-2S</keyword>
<keyword id="KW-0002">3D-structure</keyword>
<keyword id="KW-0058">Aromatic hydrocarbons catabolism</keyword>
<keyword id="KW-0223">Dioxygenase</keyword>
<keyword id="KW-0903">Direct protein sequencing</keyword>
<keyword id="KW-0408">Iron</keyword>
<keyword id="KW-0411">Iron-sulfur</keyword>
<keyword id="KW-0479">Metal-binding</keyword>
<keyword id="KW-0520">NAD</keyword>
<keyword id="KW-0560">Oxidoreductase</keyword>
<keyword id="KW-1185">Reference proteome</keyword>